<dbReference type="EMBL" id="FR682047">
    <property type="protein sequence ID" value="CBW45858.1"/>
    <property type="molecule type" value="Genomic_DNA"/>
</dbReference>
<dbReference type="EMBL" id="FR682067">
    <property type="protein sequence ID" value="CBW45878.1"/>
    <property type="molecule type" value="Genomic_DNA"/>
</dbReference>
<dbReference type="SMR" id="D9UBX6"/>
<dbReference type="ExpressionAtlas" id="D9UBX6">
    <property type="expression patterns" value="baseline and differential"/>
</dbReference>
<dbReference type="GO" id="GO:0005886">
    <property type="term" value="C:plasma membrane"/>
    <property type="evidence" value="ECO:0007669"/>
    <property type="project" value="UniProtKB-SubCell"/>
</dbReference>
<dbReference type="GO" id="GO:0006952">
    <property type="term" value="P:defense response"/>
    <property type="evidence" value="ECO:0007669"/>
    <property type="project" value="UniProtKB-KW"/>
</dbReference>
<dbReference type="CDD" id="cd06464">
    <property type="entry name" value="ACD_sHsps-like"/>
    <property type="match status" value="1"/>
</dbReference>
<dbReference type="Gene3D" id="2.60.40.790">
    <property type="match status" value="1"/>
</dbReference>
<dbReference type="InterPro" id="IPR002068">
    <property type="entry name" value="A-crystallin/Hsp20_dom"/>
</dbReference>
<dbReference type="InterPro" id="IPR008978">
    <property type="entry name" value="HSP20-like_chaperone"/>
</dbReference>
<dbReference type="PANTHER" id="PTHR43670">
    <property type="entry name" value="HEAT SHOCK PROTEIN 26"/>
    <property type="match status" value="1"/>
</dbReference>
<dbReference type="PANTHER" id="PTHR43670:SF121">
    <property type="entry name" value="PROTEIN RESTRICTED TEV MOVEMENT 2"/>
    <property type="match status" value="1"/>
</dbReference>
<dbReference type="Pfam" id="PF00011">
    <property type="entry name" value="HSP20"/>
    <property type="match status" value="1"/>
</dbReference>
<dbReference type="SUPFAM" id="SSF49764">
    <property type="entry name" value="HSP20-like chaperones"/>
    <property type="match status" value="1"/>
</dbReference>
<dbReference type="PROSITE" id="PS01031">
    <property type="entry name" value="SHSP"/>
    <property type="match status" value="1"/>
</dbReference>
<sequence length="364" mass="41152">MAARQQQKGTGFGVQYEDFVPKSEWKDQPEATILNIDLTGFAKEQMKVTYVHSSKMIRVTGERPLANRKWSRFNEVFTVPQNCLVDKIHGSFKNNVLTITMPKETITKVAYLPETSRTEAAALEKAAKLEEKRLLEESRRKEKEEEEAKQMKKQLLEEKEALIRKLQEEAKAKEEAEMRKLQEEAKAKEEAAAKKLQEEIEAKEKLEERKLEERRLEERKLEDMNLAEEAKLKKIQERKSVDESGEKEKILKPEVVYTKSGHVATPKPESGSGLKSGFGGVGEVVKSAEEKLGNLVEKEKKMGKGIMEKIRRKEITSEEKKLMMNVGVAALVIFALGAYVSYTFCSSSSSSSSPSSSSSSTKPE</sequence>
<protein>
    <recommendedName>
        <fullName>Inactive protein RESTRICTED TEV MOVEMENT 2</fullName>
    </recommendedName>
    <alternativeName>
        <fullName>Inactive restricted tobacco etch virus movement protein 2</fullName>
    </alternativeName>
</protein>
<name>RTM2B_ARATH</name>
<proteinExistence type="inferred from homology"/>
<gene>
    <name type="primary">RTM2</name>
</gene>
<comment type="function">
    <text evidence="1 5">Seems to not be involved in heat resistance (By similarity). Unable to mediate restriction of long-distance movement of the pathogenic tobacco etch virus (TEV) without causing a hypersensitive response or inducing systemic acquired resistance.</text>
</comment>
<comment type="subcellular location">
    <subcellularLocation>
        <location evidence="1">Cell membrane</location>
        <topology evidence="1">Single-pass membrane protein</topology>
    </subcellularLocation>
    <text evidence="1">Present in sieve elements.</text>
</comment>
<comment type="similarity">
    <text evidence="3">Belongs to the small heat shock protein (HSP20) family.</text>
</comment>
<comment type="caution">
    <text evidence="6">Has been shown to be active in cv. Columbia (AC Q9M670) due to naturally occurring sequence variation in this strain. The sequence shown is from strains cv. Bl-1 and cv. Sakata.</text>
</comment>
<keyword id="KW-1003">Cell membrane</keyword>
<keyword id="KW-0472">Membrane</keyword>
<keyword id="KW-0611">Plant defense</keyword>
<keyword id="KW-0677">Repeat</keyword>
<keyword id="KW-0812">Transmembrane</keyword>
<keyword id="KW-1133">Transmembrane helix</keyword>
<accession>D9UBX6</accession>
<organism>
    <name type="scientific">Arabidopsis thaliana</name>
    <name type="common">Mouse-ear cress</name>
    <dbReference type="NCBI Taxonomy" id="3702"/>
    <lineage>
        <taxon>Eukaryota</taxon>
        <taxon>Viridiplantae</taxon>
        <taxon>Streptophyta</taxon>
        <taxon>Embryophyta</taxon>
        <taxon>Tracheophyta</taxon>
        <taxon>Spermatophyta</taxon>
        <taxon>Magnoliopsida</taxon>
        <taxon>eudicotyledons</taxon>
        <taxon>Gunneridae</taxon>
        <taxon>Pentapetalae</taxon>
        <taxon>rosids</taxon>
        <taxon>malvids</taxon>
        <taxon>Brassicales</taxon>
        <taxon>Brassicaceae</taxon>
        <taxon>Camelineae</taxon>
        <taxon>Arabidopsis</taxon>
    </lineage>
</organism>
<evidence type="ECO:0000250" key="1"/>
<evidence type="ECO:0000255" key="2"/>
<evidence type="ECO:0000255" key="3">
    <source>
        <dbReference type="PROSITE-ProRule" id="PRU00285"/>
    </source>
</evidence>
<evidence type="ECO:0000256" key="4">
    <source>
        <dbReference type="SAM" id="MobiDB-lite"/>
    </source>
</evidence>
<evidence type="ECO:0000269" key="5">
    <source>
    </source>
</evidence>
<evidence type="ECO:0000305" key="6"/>
<feature type="chain" id="PRO_0000429167" description="Inactive protein RESTRICTED TEV MOVEMENT 2">
    <location>
        <begin position="1"/>
        <end position="364"/>
    </location>
</feature>
<feature type="transmembrane region" description="Helical" evidence="2">
    <location>
        <begin position="322"/>
        <end position="342"/>
    </location>
</feature>
<feature type="domain" description="sHSP" evidence="3">
    <location>
        <begin position="14"/>
        <end position="121"/>
    </location>
</feature>
<feature type="repeat" description="A-1">
    <location>
        <begin position="129"/>
        <end position="133"/>
    </location>
</feature>
<feature type="repeat" description="A-2">
    <location>
        <begin position="135"/>
        <end position="139"/>
    </location>
</feature>
<feature type="repeat" description="A-3">
    <location>
        <begin position="156"/>
        <end position="160"/>
    </location>
</feature>
<feature type="repeat" description="B-1">
    <location>
        <begin position="163"/>
        <end position="176"/>
    </location>
</feature>
<feature type="repeat" description="B-2">
    <location>
        <begin position="178"/>
        <end position="191"/>
    </location>
</feature>
<feature type="repeat" description="B-3">
    <location>
        <begin position="193"/>
        <end position="205"/>
    </location>
</feature>
<feature type="repeat" description="A-4">
    <location>
        <begin position="206"/>
        <end position="210"/>
    </location>
</feature>
<feature type="repeat" description="A-5">
    <location>
        <begin position="211"/>
        <end position="215"/>
    </location>
</feature>
<feature type="repeat" description="A-6">
    <location>
        <begin position="216"/>
        <end position="220"/>
    </location>
</feature>
<feature type="region of interest" description="6 X 5 AA repeats A of L-E-E-[SKR]-[ERK]">
    <location>
        <begin position="129"/>
        <end position="220"/>
    </location>
</feature>
<feature type="region of interest" description="3 X 14 AA repeats B of [IMA]-[RK]-K-L-Q-E-E-A-K-A-K-E-[EK]-[LA]">
    <location>
        <begin position="163"/>
        <end position="206"/>
    </location>
</feature>
<feature type="region of interest" description="Disordered" evidence="4">
    <location>
        <begin position="345"/>
        <end position="364"/>
    </location>
</feature>
<feature type="compositionally biased region" description="Low complexity" evidence="4">
    <location>
        <begin position="346"/>
        <end position="364"/>
    </location>
</feature>
<reference key="1">
    <citation type="journal article" date="2012" name="PLoS ONE">
        <title>The RTM resistance to potyviruses in Arabidopsis thaliana: natural variation of the RTM genes and evidence for the implication of additional genes.</title>
        <authorList>
            <person name="Cosson P."/>
            <person name="Schurdi-Levraud V."/>
            <person name="Le Q.H."/>
            <person name="Sicard O."/>
            <person name="Caballero M."/>
            <person name="Roux F."/>
            <person name="Le Gall O."/>
            <person name="Candresse T."/>
            <person name="Revers F."/>
        </authorList>
    </citation>
    <scope>NUCLEOTIDE SEQUENCE [GENOMIC DNA]</scope>
    <scope>FUNCTION</scope>
    <source>
        <strain>cv. Bl-1</strain>
        <strain>cv. Sakata</strain>
        <tissue>Leaf</tissue>
    </source>
</reference>